<name>RK22_CHLAT</name>
<geneLocation type="chloroplast"/>
<evidence type="ECO:0000250" key="1"/>
<evidence type="ECO:0000305" key="2"/>
<feature type="chain" id="PRO_0000354564" description="Large ribosomal subunit protein uL22c">
    <location>
        <begin position="1"/>
        <end position="119"/>
    </location>
</feature>
<accession>A2CI46</accession>
<dbReference type="EMBL" id="DQ422812">
    <property type="protein sequence ID" value="ABM87962.1"/>
    <property type="molecule type" value="Genomic_DNA"/>
</dbReference>
<dbReference type="RefSeq" id="YP_001019090.1">
    <property type="nucleotide sequence ID" value="NC_008822.1"/>
</dbReference>
<dbReference type="SMR" id="A2CI46"/>
<dbReference type="GeneID" id="4783302"/>
<dbReference type="GO" id="GO:0009507">
    <property type="term" value="C:chloroplast"/>
    <property type="evidence" value="ECO:0007669"/>
    <property type="project" value="UniProtKB-SubCell"/>
</dbReference>
<dbReference type="GO" id="GO:0015934">
    <property type="term" value="C:large ribosomal subunit"/>
    <property type="evidence" value="ECO:0007669"/>
    <property type="project" value="InterPro"/>
</dbReference>
<dbReference type="GO" id="GO:0019843">
    <property type="term" value="F:rRNA binding"/>
    <property type="evidence" value="ECO:0007669"/>
    <property type="project" value="UniProtKB-UniRule"/>
</dbReference>
<dbReference type="GO" id="GO:0003735">
    <property type="term" value="F:structural constituent of ribosome"/>
    <property type="evidence" value="ECO:0007669"/>
    <property type="project" value="InterPro"/>
</dbReference>
<dbReference type="GO" id="GO:0006412">
    <property type="term" value="P:translation"/>
    <property type="evidence" value="ECO:0007669"/>
    <property type="project" value="UniProtKB-UniRule"/>
</dbReference>
<dbReference type="CDD" id="cd00336">
    <property type="entry name" value="Ribosomal_L22"/>
    <property type="match status" value="1"/>
</dbReference>
<dbReference type="Gene3D" id="3.90.470.10">
    <property type="entry name" value="Ribosomal protein L22/L17"/>
    <property type="match status" value="1"/>
</dbReference>
<dbReference type="HAMAP" id="MF_01331_B">
    <property type="entry name" value="Ribosomal_uL22_B"/>
    <property type="match status" value="1"/>
</dbReference>
<dbReference type="InterPro" id="IPR001063">
    <property type="entry name" value="Ribosomal_uL22"/>
</dbReference>
<dbReference type="InterPro" id="IPR005727">
    <property type="entry name" value="Ribosomal_uL22_bac/chlpt-type"/>
</dbReference>
<dbReference type="InterPro" id="IPR047867">
    <property type="entry name" value="Ribosomal_uL22_bac/org-type"/>
</dbReference>
<dbReference type="InterPro" id="IPR018260">
    <property type="entry name" value="Ribosomal_uL22_CS"/>
</dbReference>
<dbReference type="InterPro" id="IPR036394">
    <property type="entry name" value="Ribosomal_uL22_sf"/>
</dbReference>
<dbReference type="NCBIfam" id="TIGR01044">
    <property type="entry name" value="rplV_bact"/>
    <property type="match status" value="1"/>
</dbReference>
<dbReference type="PANTHER" id="PTHR13501">
    <property type="entry name" value="CHLOROPLAST 50S RIBOSOMAL PROTEIN L22-RELATED"/>
    <property type="match status" value="1"/>
</dbReference>
<dbReference type="PANTHER" id="PTHR13501:SF10">
    <property type="entry name" value="LARGE RIBOSOMAL SUBUNIT PROTEIN UL22M"/>
    <property type="match status" value="1"/>
</dbReference>
<dbReference type="Pfam" id="PF00237">
    <property type="entry name" value="Ribosomal_L22"/>
    <property type="match status" value="1"/>
</dbReference>
<dbReference type="SUPFAM" id="SSF54843">
    <property type="entry name" value="Ribosomal protein L22"/>
    <property type="match status" value="1"/>
</dbReference>
<dbReference type="PROSITE" id="PS00464">
    <property type="entry name" value="RIBOSOMAL_L22"/>
    <property type="match status" value="1"/>
</dbReference>
<proteinExistence type="inferred from homology"/>
<keyword id="KW-0150">Chloroplast</keyword>
<keyword id="KW-0934">Plastid</keyword>
<keyword id="KW-0687">Ribonucleoprotein</keyword>
<keyword id="KW-0689">Ribosomal protein</keyword>
<keyword id="KW-0694">RNA-binding</keyword>
<keyword id="KW-0699">rRNA-binding</keyword>
<protein>
    <recommendedName>
        <fullName evidence="2">Large ribosomal subunit protein uL22c</fullName>
    </recommendedName>
    <alternativeName>
        <fullName>50S ribosomal protein L22, chloroplastic</fullName>
    </alternativeName>
</protein>
<reference key="1">
    <citation type="journal article" date="2007" name="BMC Biol.">
        <title>A clade uniting the green algae Mesostigma viride and Chlorokybus atmophyticus represents the deepest branch of the Streptophyta in chloroplast genome-based phylogenies.</title>
        <authorList>
            <person name="Lemieux C."/>
            <person name="Otis C."/>
            <person name="Turmel M."/>
        </authorList>
    </citation>
    <scope>NUCLEOTIDE SEQUENCE [LARGE SCALE GENOMIC DNA]</scope>
    <source>
        <strain>SAG 48.80</strain>
    </source>
</reference>
<gene>
    <name type="primary">rpl22</name>
</gene>
<organism>
    <name type="scientific">Chlorokybus atmophyticus</name>
    <name type="common">Soil alga</name>
    <dbReference type="NCBI Taxonomy" id="3144"/>
    <lineage>
        <taxon>Eukaryota</taxon>
        <taxon>Viridiplantae</taxon>
        <taxon>Streptophyta</taxon>
        <taxon>Chlorokybophyceae</taxon>
        <taxon>Chlorokybales</taxon>
        <taxon>Chlorokybaceae</taxon>
        <taxon>Chlorokybus</taxon>
    </lineage>
</organism>
<sequence length="119" mass="13471">MTQTGKSNIEAKAFARYITMSPYKVRRIVDQIRGRSYEEALMILQFMPYRACNPVLKVLYSAAANAKHNLGLNKSELSISEVKVDQGPVMKRFQPRAQGRGYPIRKPTCHISLTVKGLK</sequence>
<comment type="function">
    <text evidence="1">This protein binds specifically to 23S rRNA.</text>
</comment>
<comment type="function">
    <text evidence="1">The globular domain of the protein is located near the polypeptide exit tunnel on the outside of the subunit, while an extended beta-hairpin is found that lines the wall of the exit tunnel in the center of the 70S ribosome.</text>
</comment>
<comment type="subunit">
    <text evidence="1">Part of the 50S ribosomal subunit.</text>
</comment>
<comment type="subcellular location">
    <subcellularLocation>
        <location>Plastid</location>
        <location>Chloroplast</location>
    </subcellularLocation>
</comment>
<comment type="similarity">
    <text evidence="2">Belongs to the universal ribosomal protein uL22 family.</text>
</comment>